<comment type="function">
    <text evidence="2">Cell wall formation.</text>
</comment>
<comment type="catalytic activity">
    <reaction evidence="2">
        <text>2 D-alanine + ATP = D-alanyl-D-alanine + ADP + phosphate + H(+)</text>
        <dbReference type="Rhea" id="RHEA:11224"/>
        <dbReference type="ChEBI" id="CHEBI:15378"/>
        <dbReference type="ChEBI" id="CHEBI:30616"/>
        <dbReference type="ChEBI" id="CHEBI:43474"/>
        <dbReference type="ChEBI" id="CHEBI:57416"/>
        <dbReference type="ChEBI" id="CHEBI:57822"/>
        <dbReference type="ChEBI" id="CHEBI:456216"/>
        <dbReference type="EC" id="6.3.2.4"/>
    </reaction>
</comment>
<comment type="cofactor">
    <cofactor evidence="1">
        <name>Mg(2+)</name>
        <dbReference type="ChEBI" id="CHEBI:18420"/>
    </cofactor>
    <cofactor evidence="1">
        <name>Mn(2+)</name>
        <dbReference type="ChEBI" id="CHEBI:29035"/>
    </cofactor>
    <text evidence="1">Binds 2 magnesium or manganese ions per subunit.</text>
</comment>
<comment type="pathway">
    <text evidence="2">Cell wall biogenesis; peptidoglycan biosynthesis.</text>
</comment>
<comment type="subcellular location">
    <subcellularLocation>
        <location evidence="2">Cytoplasm</location>
    </subcellularLocation>
</comment>
<comment type="similarity">
    <text evidence="2">Belongs to the D-alanine--D-alanine ligase family.</text>
</comment>
<reference key="1">
    <citation type="journal article" date="2002" name="DNA Res.">
        <title>Complete genomic sequence of nitrogen-fixing symbiotic bacterium Bradyrhizobium japonicum USDA110.</title>
        <authorList>
            <person name="Kaneko T."/>
            <person name="Nakamura Y."/>
            <person name="Sato S."/>
            <person name="Minamisawa K."/>
            <person name="Uchiumi T."/>
            <person name="Sasamoto S."/>
            <person name="Watanabe A."/>
            <person name="Idesawa K."/>
            <person name="Iriguchi M."/>
            <person name="Kawashima K."/>
            <person name="Kohara M."/>
            <person name="Matsumoto M."/>
            <person name="Shimpo S."/>
            <person name="Tsuruoka H."/>
            <person name="Wada T."/>
            <person name="Yamada M."/>
            <person name="Tabata S."/>
        </authorList>
    </citation>
    <scope>NUCLEOTIDE SEQUENCE [LARGE SCALE GENOMIC DNA]</scope>
    <source>
        <strain>JCM 10833 / BCRC 13528 / IAM 13628 / NBRC 14792 / USDA 110</strain>
    </source>
</reference>
<keyword id="KW-0067">ATP-binding</keyword>
<keyword id="KW-0133">Cell shape</keyword>
<keyword id="KW-0961">Cell wall biogenesis/degradation</keyword>
<keyword id="KW-0963">Cytoplasm</keyword>
<keyword id="KW-0436">Ligase</keyword>
<keyword id="KW-0460">Magnesium</keyword>
<keyword id="KW-0464">Manganese</keyword>
<keyword id="KW-0479">Metal-binding</keyword>
<keyword id="KW-0547">Nucleotide-binding</keyword>
<keyword id="KW-0573">Peptidoglycan synthesis</keyword>
<keyword id="KW-1185">Reference proteome</keyword>
<protein>
    <recommendedName>
        <fullName evidence="2">D-alanine--D-alanine ligase B</fullName>
        <ecNumber evidence="2">6.3.2.4</ecNumber>
    </recommendedName>
    <alternativeName>
        <fullName evidence="2">D-Ala-D-Ala ligase B</fullName>
    </alternativeName>
    <alternativeName>
        <fullName evidence="2">D-alanylalanine synthetase B</fullName>
    </alternativeName>
</protein>
<dbReference type="EC" id="6.3.2.4" evidence="2"/>
<dbReference type="EMBL" id="BA000040">
    <property type="protein sequence ID" value="BAC48670.1"/>
    <property type="molecule type" value="Genomic_DNA"/>
</dbReference>
<dbReference type="RefSeq" id="NP_770045.1">
    <property type="nucleotide sequence ID" value="NC_004463.1"/>
</dbReference>
<dbReference type="SMR" id="Q89PS5"/>
<dbReference type="FunCoup" id="Q89PS5">
    <property type="interactions" value="195"/>
</dbReference>
<dbReference type="STRING" id="224911.AAV28_14055"/>
<dbReference type="EnsemblBacteria" id="BAC48670">
    <property type="protein sequence ID" value="BAC48670"/>
    <property type="gene ID" value="BAC48670"/>
</dbReference>
<dbReference type="KEGG" id="bja:blr3405"/>
<dbReference type="PATRIC" id="fig|224911.5.peg.3409"/>
<dbReference type="eggNOG" id="COG1181">
    <property type="taxonomic scope" value="Bacteria"/>
</dbReference>
<dbReference type="HOGENOM" id="CLU_039268_0_0_5"/>
<dbReference type="InParanoid" id="Q89PS5"/>
<dbReference type="OrthoDB" id="9813261at2"/>
<dbReference type="PhylomeDB" id="Q89PS5"/>
<dbReference type="UniPathway" id="UPA00219"/>
<dbReference type="Proteomes" id="UP000002526">
    <property type="component" value="Chromosome"/>
</dbReference>
<dbReference type="GO" id="GO:0005829">
    <property type="term" value="C:cytosol"/>
    <property type="evidence" value="ECO:0000318"/>
    <property type="project" value="GO_Central"/>
</dbReference>
<dbReference type="GO" id="GO:0005524">
    <property type="term" value="F:ATP binding"/>
    <property type="evidence" value="ECO:0007669"/>
    <property type="project" value="UniProtKB-KW"/>
</dbReference>
<dbReference type="GO" id="GO:0008716">
    <property type="term" value="F:D-alanine-D-alanine ligase activity"/>
    <property type="evidence" value="ECO:0000318"/>
    <property type="project" value="GO_Central"/>
</dbReference>
<dbReference type="GO" id="GO:0046872">
    <property type="term" value="F:metal ion binding"/>
    <property type="evidence" value="ECO:0007669"/>
    <property type="project" value="UniProtKB-KW"/>
</dbReference>
<dbReference type="GO" id="GO:0071555">
    <property type="term" value="P:cell wall organization"/>
    <property type="evidence" value="ECO:0007669"/>
    <property type="project" value="UniProtKB-KW"/>
</dbReference>
<dbReference type="GO" id="GO:0009252">
    <property type="term" value="P:peptidoglycan biosynthetic process"/>
    <property type="evidence" value="ECO:0000318"/>
    <property type="project" value="GO_Central"/>
</dbReference>
<dbReference type="GO" id="GO:0008360">
    <property type="term" value="P:regulation of cell shape"/>
    <property type="evidence" value="ECO:0007669"/>
    <property type="project" value="UniProtKB-KW"/>
</dbReference>
<dbReference type="FunFam" id="3.30.1490.20:FF:000007">
    <property type="entry name" value="D-alanine--D-alanine ligase"/>
    <property type="match status" value="1"/>
</dbReference>
<dbReference type="FunFam" id="3.30.470.20:FF:000008">
    <property type="entry name" value="D-alanine--D-alanine ligase"/>
    <property type="match status" value="1"/>
</dbReference>
<dbReference type="Gene3D" id="3.40.50.20">
    <property type="match status" value="1"/>
</dbReference>
<dbReference type="Gene3D" id="3.30.1490.20">
    <property type="entry name" value="ATP-grasp fold, A domain"/>
    <property type="match status" value="1"/>
</dbReference>
<dbReference type="Gene3D" id="3.30.470.20">
    <property type="entry name" value="ATP-grasp fold, B domain"/>
    <property type="match status" value="1"/>
</dbReference>
<dbReference type="HAMAP" id="MF_00047">
    <property type="entry name" value="Dala_Dala_lig"/>
    <property type="match status" value="1"/>
</dbReference>
<dbReference type="InterPro" id="IPR011761">
    <property type="entry name" value="ATP-grasp"/>
</dbReference>
<dbReference type="InterPro" id="IPR013815">
    <property type="entry name" value="ATP_grasp_subdomain_1"/>
</dbReference>
<dbReference type="InterPro" id="IPR000291">
    <property type="entry name" value="D-Ala_lig_Van_CS"/>
</dbReference>
<dbReference type="InterPro" id="IPR005905">
    <property type="entry name" value="D_ala_D_ala"/>
</dbReference>
<dbReference type="InterPro" id="IPR011095">
    <property type="entry name" value="Dala_Dala_lig_C"/>
</dbReference>
<dbReference type="InterPro" id="IPR011127">
    <property type="entry name" value="Dala_Dala_lig_N"/>
</dbReference>
<dbReference type="InterPro" id="IPR016185">
    <property type="entry name" value="PreATP-grasp_dom_sf"/>
</dbReference>
<dbReference type="NCBIfam" id="TIGR01205">
    <property type="entry name" value="D_ala_D_alaTIGR"/>
    <property type="match status" value="1"/>
</dbReference>
<dbReference type="NCBIfam" id="NF002528">
    <property type="entry name" value="PRK01966.1-4"/>
    <property type="match status" value="1"/>
</dbReference>
<dbReference type="PANTHER" id="PTHR23132">
    <property type="entry name" value="D-ALANINE--D-ALANINE LIGASE"/>
    <property type="match status" value="1"/>
</dbReference>
<dbReference type="PANTHER" id="PTHR23132:SF25">
    <property type="entry name" value="D-ALANINE--D-ALANINE LIGASE A"/>
    <property type="match status" value="1"/>
</dbReference>
<dbReference type="Pfam" id="PF07478">
    <property type="entry name" value="Dala_Dala_lig_C"/>
    <property type="match status" value="1"/>
</dbReference>
<dbReference type="Pfam" id="PF01820">
    <property type="entry name" value="Dala_Dala_lig_N"/>
    <property type="match status" value="1"/>
</dbReference>
<dbReference type="PIRSF" id="PIRSF039102">
    <property type="entry name" value="Ddl/VanB"/>
    <property type="match status" value="1"/>
</dbReference>
<dbReference type="SUPFAM" id="SSF56059">
    <property type="entry name" value="Glutathione synthetase ATP-binding domain-like"/>
    <property type="match status" value="1"/>
</dbReference>
<dbReference type="SUPFAM" id="SSF52440">
    <property type="entry name" value="PreATP-grasp domain"/>
    <property type="match status" value="1"/>
</dbReference>
<dbReference type="PROSITE" id="PS50975">
    <property type="entry name" value="ATP_GRASP"/>
    <property type="match status" value="1"/>
</dbReference>
<dbReference type="PROSITE" id="PS00843">
    <property type="entry name" value="DALA_DALA_LIGASE_1"/>
    <property type="match status" value="1"/>
</dbReference>
<dbReference type="PROSITE" id="PS00844">
    <property type="entry name" value="DALA_DALA_LIGASE_2"/>
    <property type="match status" value="1"/>
</dbReference>
<name>DDLB_BRADU</name>
<organism>
    <name type="scientific">Bradyrhizobium diazoefficiens (strain JCM 10833 / BCRC 13528 / IAM 13628 / NBRC 14792 / USDA 110)</name>
    <dbReference type="NCBI Taxonomy" id="224911"/>
    <lineage>
        <taxon>Bacteria</taxon>
        <taxon>Pseudomonadati</taxon>
        <taxon>Pseudomonadota</taxon>
        <taxon>Alphaproteobacteria</taxon>
        <taxon>Hyphomicrobiales</taxon>
        <taxon>Nitrobacteraceae</taxon>
        <taxon>Bradyrhizobium</taxon>
    </lineage>
</organism>
<feature type="chain" id="PRO_0000177793" description="D-alanine--D-alanine ligase B">
    <location>
        <begin position="1"/>
        <end position="376"/>
    </location>
</feature>
<feature type="domain" description="ATP-grasp" evidence="2">
    <location>
        <begin position="155"/>
        <end position="361"/>
    </location>
</feature>
<feature type="binding site" evidence="2">
    <location>
        <begin position="184"/>
        <end position="239"/>
    </location>
    <ligand>
        <name>ATP</name>
        <dbReference type="ChEBI" id="CHEBI:30616"/>
    </ligand>
</feature>
<feature type="binding site" evidence="2">
    <location>
        <position position="316"/>
    </location>
    <ligand>
        <name>Mg(2+)</name>
        <dbReference type="ChEBI" id="CHEBI:18420"/>
        <label>1</label>
    </ligand>
</feature>
<feature type="binding site" evidence="2">
    <location>
        <position position="328"/>
    </location>
    <ligand>
        <name>Mg(2+)</name>
        <dbReference type="ChEBI" id="CHEBI:18420"/>
        <label>1</label>
    </ligand>
</feature>
<feature type="binding site" evidence="2">
    <location>
        <position position="328"/>
    </location>
    <ligand>
        <name>Mg(2+)</name>
        <dbReference type="ChEBI" id="CHEBI:18420"/>
        <label>2</label>
    </ligand>
</feature>
<feature type="binding site" evidence="2">
    <location>
        <position position="330"/>
    </location>
    <ligand>
        <name>Mg(2+)</name>
        <dbReference type="ChEBI" id="CHEBI:18420"/>
        <label>2</label>
    </ligand>
</feature>
<evidence type="ECO:0000250" key="1"/>
<evidence type="ECO:0000255" key="2">
    <source>
        <dbReference type="HAMAP-Rule" id="MF_00047"/>
    </source>
</evidence>
<accession>Q89PS5</accession>
<sequence>MTAYGGEMTKERRKITVGLLFGGRSAEHEVSRASAANILRALNSDRYDVYLIGISRDGRWFACDSGNGAGTGSTALTISDEAPEIGLVPGGRGRLVHCDGPTGSDAGSIDVAFPILHGPNGEDGTVQGALELADVSFVGSSVTGSAVAMDKEVSKRLMRDAGLPVVPFLTTTASSRIEYAAAVAALGTPDLFVKPANLGSSVGVSRARSEEEFAASCALAFRYDRKILVEQALNGAREIECSVLEESTGDIRASGLGEIVRASEHGFYSYQAKYIDADGAALHIPADLPLLQARRLQELAVEVFNVLCCEGMARVDFFVQGDEVFVNEANTLPGFTSSSMYPKLWEASGLSQTDLMDKLIAHAFARHERRRALSFG</sequence>
<proteinExistence type="inferred from homology"/>
<gene>
    <name evidence="2" type="primary">ddlA</name>
    <name type="synonym">ddlB</name>
    <name type="ordered locus">blr3405</name>
</gene>